<comment type="function">
    <text evidence="2">Peptidyl-tRNA hydrolase involved in the recycling of tRNA-Lys from diacetyl-lysyl-tRNA-Lys and is important for mitochondrial function.</text>
</comment>
<comment type="catalytic activity">
    <reaction>
        <text>an N-acyl-L-alpha-aminoacyl-tRNA + H2O = an N-acyl-L-amino acid + a tRNA + H(+)</text>
        <dbReference type="Rhea" id="RHEA:54448"/>
        <dbReference type="Rhea" id="RHEA-COMP:10123"/>
        <dbReference type="Rhea" id="RHEA-COMP:13883"/>
        <dbReference type="ChEBI" id="CHEBI:15377"/>
        <dbReference type="ChEBI" id="CHEBI:15378"/>
        <dbReference type="ChEBI" id="CHEBI:59874"/>
        <dbReference type="ChEBI" id="CHEBI:78442"/>
        <dbReference type="ChEBI" id="CHEBI:138191"/>
        <dbReference type="EC" id="3.1.1.29"/>
    </reaction>
</comment>
<comment type="subcellular location">
    <subcellularLocation>
        <location evidence="2">Mitochondrion</location>
    </subcellularLocation>
</comment>
<comment type="similarity">
    <text evidence="3">Belongs to the PTH family.</text>
</comment>
<dbReference type="EC" id="3.1.1.29"/>
<dbReference type="EMBL" id="CU329671">
    <property type="protein sequence ID" value="CAA21173.2"/>
    <property type="molecule type" value="Genomic_DNA"/>
</dbReference>
<dbReference type="PIR" id="T40118">
    <property type="entry name" value="T40118"/>
</dbReference>
<dbReference type="RefSeq" id="NP_596234.2">
    <property type="nucleotide sequence ID" value="NM_001022154.3"/>
</dbReference>
<dbReference type="SMR" id="O74806"/>
<dbReference type="BioGRID" id="276869">
    <property type="interactions" value="7"/>
</dbReference>
<dbReference type="FunCoup" id="O74806">
    <property type="interactions" value="132"/>
</dbReference>
<dbReference type="STRING" id="284812.O74806"/>
<dbReference type="PaxDb" id="4896-SPBC2D10.15c.1"/>
<dbReference type="EnsemblFungi" id="SPBC2D10.15c.1">
    <property type="protein sequence ID" value="SPBC2D10.15c.1:pep"/>
    <property type="gene ID" value="SPBC2D10.15c"/>
</dbReference>
<dbReference type="GeneID" id="2540340"/>
<dbReference type="KEGG" id="spo:2540340"/>
<dbReference type="PomBase" id="SPBC2D10.15c">
    <property type="gene designation" value="pth1"/>
</dbReference>
<dbReference type="VEuPathDB" id="FungiDB:SPBC2D10.15c"/>
<dbReference type="eggNOG" id="KOG2255">
    <property type="taxonomic scope" value="Eukaryota"/>
</dbReference>
<dbReference type="HOGENOM" id="CLU_062456_2_1_1"/>
<dbReference type="InParanoid" id="O74806"/>
<dbReference type="OMA" id="HDELQVP"/>
<dbReference type="PhylomeDB" id="O74806"/>
<dbReference type="PRO" id="PR:O74806"/>
<dbReference type="Proteomes" id="UP000002485">
    <property type="component" value="Chromosome II"/>
</dbReference>
<dbReference type="GO" id="GO:0005759">
    <property type="term" value="C:mitochondrial matrix"/>
    <property type="evidence" value="ECO:0000305"/>
    <property type="project" value="PomBase"/>
</dbReference>
<dbReference type="GO" id="GO:0004045">
    <property type="term" value="F:peptidyl-tRNA hydrolase activity"/>
    <property type="evidence" value="ECO:0000318"/>
    <property type="project" value="GO_Central"/>
</dbReference>
<dbReference type="GO" id="GO:0000049">
    <property type="term" value="F:tRNA binding"/>
    <property type="evidence" value="ECO:0007669"/>
    <property type="project" value="UniProtKB-KW"/>
</dbReference>
<dbReference type="GO" id="GO:0032543">
    <property type="term" value="P:mitochondrial translation"/>
    <property type="evidence" value="ECO:0000266"/>
    <property type="project" value="PomBase"/>
</dbReference>
<dbReference type="CDD" id="cd00462">
    <property type="entry name" value="PTH"/>
    <property type="match status" value="1"/>
</dbReference>
<dbReference type="Gene3D" id="3.40.50.1470">
    <property type="entry name" value="Peptidyl-tRNA hydrolase"/>
    <property type="match status" value="1"/>
</dbReference>
<dbReference type="InterPro" id="IPR001328">
    <property type="entry name" value="Pept_tRNA_hydro"/>
</dbReference>
<dbReference type="InterPro" id="IPR018171">
    <property type="entry name" value="Pept_tRNA_hydro_CS"/>
</dbReference>
<dbReference type="InterPro" id="IPR036416">
    <property type="entry name" value="Pept_tRNA_hydro_sf"/>
</dbReference>
<dbReference type="NCBIfam" id="TIGR00447">
    <property type="entry name" value="pth"/>
    <property type="match status" value="1"/>
</dbReference>
<dbReference type="PANTHER" id="PTHR17224">
    <property type="entry name" value="PEPTIDYL-TRNA HYDROLASE"/>
    <property type="match status" value="1"/>
</dbReference>
<dbReference type="PANTHER" id="PTHR17224:SF1">
    <property type="entry name" value="PEPTIDYL-TRNA HYDROLASE"/>
    <property type="match status" value="1"/>
</dbReference>
<dbReference type="Pfam" id="PF01195">
    <property type="entry name" value="Pept_tRNA_hydro"/>
    <property type="match status" value="1"/>
</dbReference>
<dbReference type="SUPFAM" id="SSF53178">
    <property type="entry name" value="Peptidyl-tRNA hydrolase-like"/>
    <property type="match status" value="1"/>
</dbReference>
<dbReference type="PROSITE" id="PS01196">
    <property type="entry name" value="PEPT_TRNA_HYDROL_2"/>
    <property type="match status" value="1"/>
</dbReference>
<evidence type="ECO:0000250" key="1">
    <source>
        <dbReference type="UniProtKB" id="P0A7D1"/>
    </source>
</evidence>
<evidence type="ECO:0000250" key="2">
    <source>
        <dbReference type="UniProtKB" id="P38876"/>
    </source>
</evidence>
<evidence type="ECO:0000305" key="3"/>
<reference key="1">
    <citation type="journal article" date="2002" name="Nature">
        <title>The genome sequence of Schizosaccharomyces pombe.</title>
        <authorList>
            <person name="Wood V."/>
            <person name="Gwilliam R."/>
            <person name="Rajandream M.A."/>
            <person name="Lyne M.H."/>
            <person name="Lyne R."/>
            <person name="Stewart A."/>
            <person name="Sgouros J.G."/>
            <person name="Peat N."/>
            <person name="Hayles J."/>
            <person name="Baker S.G."/>
            <person name="Basham D."/>
            <person name="Bowman S."/>
            <person name="Brooks K."/>
            <person name="Brown D."/>
            <person name="Brown S."/>
            <person name="Chillingworth T."/>
            <person name="Churcher C.M."/>
            <person name="Collins M."/>
            <person name="Connor R."/>
            <person name="Cronin A."/>
            <person name="Davis P."/>
            <person name="Feltwell T."/>
            <person name="Fraser A."/>
            <person name="Gentles S."/>
            <person name="Goble A."/>
            <person name="Hamlin N."/>
            <person name="Harris D.E."/>
            <person name="Hidalgo J."/>
            <person name="Hodgson G."/>
            <person name="Holroyd S."/>
            <person name="Hornsby T."/>
            <person name="Howarth S."/>
            <person name="Huckle E.J."/>
            <person name="Hunt S."/>
            <person name="Jagels K."/>
            <person name="James K.D."/>
            <person name="Jones L."/>
            <person name="Jones M."/>
            <person name="Leather S."/>
            <person name="McDonald S."/>
            <person name="McLean J."/>
            <person name="Mooney P."/>
            <person name="Moule S."/>
            <person name="Mungall K.L."/>
            <person name="Murphy L.D."/>
            <person name="Niblett D."/>
            <person name="Odell C."/>
            <person name="Oliver K."/>
            <person name="O'Neil S."/>
            <person name="Pearson D."/>
            <person name="Quail M.A."/>
            <person name="Rabbinowitsch E."/>
            <person name="Rutherford K.M."/>
            <person name="Rutter S."/>
            <person name="Saunders D."/>
            <person name="Seeger K."/>
            <person name="Sharp S."/>
            <person name="Skelton J."/>
            <person name="Simmonds M.N."/>
            <person name="Squares R."/>
            <person name="Squares S."/>
            <person name="Stevens K."/>
            <person name="Taylor K."/>
            <person name="Taylor R.G."/>
            <person name="Tivey A."/>
            <person name="Walsh S.V."/>
            <person name="Warren T."/>
            <person name="Whitehead S."/>
            <person name="Woodward J.R."/>
            <person name="Volckaert G."/>
            <person name="Aert R."/>
            <person name="Robben J."/>
            <person name="Grymonprez B."/>
            <person name="Weltjens I."/>
            <person name="Vanstreels E."/>
            <person name="Rieger M."/>
            <person name="Schaefer M."/>
            <person name="Mueller-Auer S."/>
            <person name="Gabel C."/>
            <person name="Fuchs M."/>
            <person name="Duesterhoeft A."/>
            <person name="Fritzc C."/>
            <person name="Holzer E."/>
            <person name="Moestl D."/>
            <person name="Hilbert H."/>
            <person name="Borzym K."/>
            <person name="Langer I."/>
            <person name="Beck A."/>
            <person name="Lehrach H."/>
            <person name="Reinhardt R."/>
            <person name="Pohl T.M."/>
            <person name="Eger P."/>
            <person name="Zimmermann W."/>
            <person name="Wedler H."/>
            <person name="Wambutt R."/>
            <person name="Purnelle B."/>
            <person name="Goffeau A."/>
            <person name="Cadieu E."/>
            <person name="Dreano S."/>
            <person name="Gloux S."/>
            <person name="Lelaure V."/>
            <person name="Mottier S."/>
            <person name="Galibert F."/>
            <person name="Aves S.J."/>
            <person name="Xiang Z."/>
            <person name="Hunt C."/>
            <person name="Moore K."/>
            <person name="Hurst S.M."/>
            <person name="Lucas M."/>
            <person name="Rochet M."/>
            <person name="Gaillardin C."/>
            <person name="Tallada V.A."/>
            <person name="Garzon A."/>
            <person name="Thode G."/>
            <person name="Daga R.R."/>
            <person name="Cruzado L."/>
            <person name="Jimenez J."/>
            <person name="Sanchez M."/>
            <person name="del Rey F."/>
            <person name="Benito J."/>
            <person name="Dominguez A."/>
            <person name="Revuelta J.L."/>
            <person name="Moreno S."/>
            <person name="Armstrong J."/>
            <person name="Forsburg S.L."/>
            <person name="Cerutti L."/>
            <person name="Lowe T."/>
            <person name="McCombie W.R."/>
            <person name="Paulsen I."/>
            <person name="Potashkin J."/>
            <person name="Shpakovski G.V."/>
            <person name="Ussery D."/>
            <person name="Barrell B.G."/>
            <person name="Nurse P."/>
        </authorList>
    </citation>
    <scope>NUCLEOTIDE SEQUENCE [LARGE SCALE GENOMIC DNA]</scope>
    <source>
        <strain>972 / ATCC 24843</strain>
    </source>
</reference>
<accession>O74806</accession>
<sequence length="206" mass="23410">MAIKHLPKILIARKNKAEVNHCDLKRRVSIKIIYGLGNPGSAFVKSRHSLGKLMVSMYADSMAFPKNWPSTKENLTLVLSTSYMNDSGKQLKKISNDFVRKVSPLDKIVYVVVHDELELDLGKVKLRLPGGSHRGHNGIRSCQEFLGKESFYRIGLGIGRCESRNREDVSDYVLSKFNSNEMKLIETDIFHKFCNILQQLQLSIET</sequence>
<feature type="chain" id="PRO_0000187866" description="Probable peptidyl-tRNA hydrolase">
    <location>
        <begin position="1"/>
        <end position="206"/>
    </location>
</feature>
<feature type="active site" description="Proton acceptor" evidence="1">
    <location>
        <position position="48"/>
    </location>
</feature>
<feature type="binding site" evidence="1">
    <location>
        <position position="83"/>
    </location>
    <ligand>
        <name>tRNA</name>
        <dbReference type="ChEBI" id="CHEBI:17843"/>
    </ligand>
</feature>
<feature type="binding site" evidence="1">
    <location>
        <position position="85"/>
    </location>
    <ligand>
        <name>tRNA</name>
        <dbReference type="ChEBI" id="CHEBI:17843"/>
    </ligand>
</feature>
<feature type="binding site" evidence="1">
    <location>
        <position position="137"/>
    </location>
    <ligand>
        <name>tRNA</name>
        <dbReference type="ChEBI" id="CHEBI:17843"/>
    </ligand>
</feature>
<feature type="site" description="Stabilizes the basic form of H active site to accept a proton" evidence="1">
    <location>
        <position position="115"/>
    </location>
</feature>
<proteinExistence type="inferred from homology"/>
<gene>
    <name type="primary">pth1</name>
    <name type="ORF">SPBC2D10.15c</name>
</gene>
<organism>
    <name type="scientific">Schizosaccharomyces pombe (strain 972 / ATCC 24843)</name>
    <name type="common">Fission yeast</name>
    <dbReference type="NCBI Taxonomy" id="284812"/>
    <lineage>
        <taxon>Eukaryota</taxon>
        <taxon>Fungi</taxon>
        <taxon>Dikarya</taxon>
        <taxon>Ascomycota</taxon>
        <taxon>Taphrinomycotina</taxon>
        <taxon>Schizosaccharomycetes</taxon>
        <taxon>Schizosaccharomycetales</taxon>
        <taxon>Schizosaccharomycetaceae</taxon>
        <taxon>Schizosaccharomyces</taxon>
    </lineage>
</organism>
<name>PTH_SCHPO</name>
<protein>
    <recommendedName>
        <fullName>Probable peptidyl-tRNA hydrolase</fullName>
        <shortName>PTH</shortName>
        <ecNumber>3.1.1.29</ecNumber>
    </recommendedName>
</protein>
<keyword id="KW-0378">Hydrolase</keyword>
<keyword id="KW-0496">Mitochondrion</keyword>
<keyword id="KW-1185">Reference proteome</keyword>
<keyword id="KW-0694">RNA-binding</keyword>
<keyword id="KW-0820">tRNA-binding</keyword>